<comment type="function">
    <text evidence="4">Auxiliary transcriptional regulator of sulfur amino acid metabolism. Involved in the transcriptional activation of MET28.</text>
</comment>
<comment type="subunit">
    <text evidence="4">Interacts with MET4 and MET28.</text>
</comment>
<comment type="subcellular location">
    <subcellularLocation>
        <location evidence="3">Cytoplasm</location>
    </subcellularLocation>
    <subcellularLocation>
        <location evidence="3">Nucleus</location>
    </subcellularLocation>
</comment>
<gene>
    <name type="primary">MET32</name>
    <name type="ordered locus">YDR253C</name>
    <name type="ORF">YD9320A.03C</name>
</gene>
<dbReference type="EMBL" id="Z70202">
    <property type="protein sequence ID" value="CAA94092.1"/>
    <property type="molecule type" value="Genomic_DNA"/>
</dbReference>
<dbReference type="EMBL" id="Z68329">
    <property type="protein sequence ID" value="CAA92710.1"/>
    <property type="molecule type" value="Genomic_DNA"/>
</dbReference>
<dbReference type="EMBL" id="AY557729">
    <property type="protein sequence ID" value="AAS56055.1"/>
    <property type="molecule type" value="Genomic_DNA"/>
</dbReference>
<dbReference type="EMBL" id="BK006938">
    <property type="protein sequence ID" value="DAA12093.1"/>
    <property type="molecule type" value="Genomic_DNA"/>
</dbReference>
<dbReference type="PIR" id="S67310">
    <property type="entry name" value="S67310"/>
</dbReference>
<dbReference type="RefSeq" id="NP_010539.1">
    <property type="nucleotide sequence ID" value="NM_001180561.1"/>
</dbReference>
<dbReference type="SMR" id="Q12041"/>
<dbReference type="BioGRID" id="32303">
    <property type="interactions" value="92"/>
</dbReference>
<dbReference type="ComplexPortal" id="CPX-1015">
    <property type="entry name" value="MET4-MET28-MET32 sulfur metabolism transcription factor complex"/>
</dbReference>
<dbReference type="DIP" id="DIP-2411N"/>
<dbReference type="FunCoup" id="Q12041">
    <property type="interactions" value="4745"/>
</dbReference>
<dbReference type="IntAct" id="Q12041">
    <property type="interactions" value="1"/>
</dbReference>
<dbReference type="STRING" id="4932.YDR253C"/>
<dbReference type="PaxDb" id="4932-YDR253C"/>
<dbReference type="PeptideAtlas" id="Q12041"/>
<dbReference type="EnsemblFungi" id="YDR253C_mRNA">
    <property type="protein sequence ID" value="YDR253C"/>
    <property type="gene ID" value="YDR253C"/>
</dbReference>
<dbReference type="GeneID" id="851840"/>
<dbReference type="KEGG" id="sce:YDR253C"/>
<dbReference type="AGR" id="SGD:S000002661"/>
<dbReference type="SGD" id="S000002661">
    <property type="gene designation" value="MET32"/>
</dbReference>
<dbReference type="VEuPathDB" id="FungiDB:YDR253C"/>
<dbReference type="eggNOG" id="KOG1721">
    <property type="taxonomic scope" value="Eukaryota"/>
</dbReference>
<dbReference type="GeneTree" id="ENSGT00940000176515"/>
<dbReference type="HOGENOM" id="CLU_040688_2_0_1"/>
<dbReference type="InParanoid" id="Q12041"/>
<dbReference type="OMA" id="HYDTLTC"/>
<dbReference type="OrthoDB" id="8922241at2759"/>
<dbReference type="BioCyc" id="YEAST:G3O-29825-MONOMER"/>
<dbReference type="BioGRID-ORCS" id="851840">
    <property type="hits" value="0 hits in 13 CRISPR screens"/>
</dbReference>
<dbReference type="PRO" id="PR:Q12041"/>
<dbReference type="Proteomes" id="UP000002311">
    <property type="component" value="Chromosome IV"/>
</dbReference>
<dbReference type="RNAct" id="Q12041">
    <property type="molecule type" value="protein"/>
</dbReference>
<dbReference type="GO" id="GO:0005737">
    <property type="term" value="C:cytoplasm"/>
    <property type="evidence" value="ECO:0007005"/>
    <property type="project" value="SGD"/>
</dbReference>
<dbReference type="GO" id="GO:0005634">
    <property type="term" value="C:nucleus"/>
    <property type="evidence" value="ECO:0007005"/>
    <property type="project" value="SGD"/>
</dbReference>
<dbReference type="GO" id="GO:0005667">
    <property type="term" value="C:transcription regulator complex"/>
    <property type="evidence" value="ECO:0000303"/>
    <property type="project" value="ComplexPortal"/>
</dbReference>
<dbReference type="GO" id="GO:0000987">
    <property type="term" value="F:cis-regulatory region sequence-specific DNA binding"/>
    <property type="evidence" value="ECO:0000314"/>
    <property type="project" value="SGD"/>
</dbReference>
<dbReference type="GO" id="GO:0000981">
    <property type="term" value="F:DNA-binding transcription factor activity, RNA polymerase II-specific"/>
    <property type="evidence" value="ECO:0000314"/>
    <property type="project" value="SGD"/>
</dbReference>
<dbReference type="GO" id="GO:0061629">
    <property type="term" value="F:RNA polymerase II-specific DNA-binding transcription factor binding"/>
    <property type="evidence" value="ECO:0000314"/>
    <property type="project" value="SGD"/>
</dbReference>
<dbReference type="GO" id="GO:0008270">
    <property type="term" value="F:zinc ion binding"/>
    <property type="evidence" value="ECO:0007669"/>
    <property type="project" value="UniProtKB-KW"/>
</dbReference>
<dbReference type="GO" id="GO:0000122">
    <property type="term" value="P:negative regulation of transcription by RNA polymerase II"/>
    <property type="evidence" value="ECO:0000315"/>
    <property type="project" value="SGD"/>
</dbReference>
<dbReference type="GO" id="GO:0045944">
    <property type="term" value="P:positive regulation of transcription by RNA polymerase II"/>
    <property type="evidence" value="ECO:0000315"/>
    <property type="project" value="SGD"/>
</dbReference>
<dbReference type="GO" id="GO:0007346">
    <property type="term" value="P:regulation of mitotic cell cycle"/>
    <property type="evidence" value="ECO:0000315"/>
    <property type="project" value="SGD"/>
</dbReference>
<dbReference type="GO" id="GO:0031335">
    <property type="term" value="P:regulation of sulfur amino acid metabolic process"/>
    <property type="evidence" value="ECO:0000314"/>
    <property type="project" value="SGD"/>
</dbReference>
<dbReference type="GO" id="GO:0042762">
    <property type="term" value="P:regulation of sulfur metabolic process"/>
    <property type="evidence" value="ECO:0000303"/>
    <property type="project" value="ComplexPortal"/>
</dbReference>
<dbReference type="GO" id="GO:0006357">
    <property type="term" value="P:regulation of transcription by RNA polymerase II"/>
    <property type="evidence" value="ECO:0000314"/>
    <property type="project" value="SGD"/>
</dbReference>
<dbReference type="FunFam" id="3.30.160.60:FF:002022">
    <property type="entry name" value="Transcriptional regulator MET31"/>
    <property type="match status" value="1"/>
</dbReference>
<dbReference type="FunFam" id="3.30.160.60:FF:000624">
    <property type="entry name" value="zinc finger protein 697"/>
    <property type="match status" value="1"/>
</dbReference>
<dbReference type="Gene3D" id="3.30.160.60">
    <property type="entry name" value="Classic Zinc Finger"/>
    <property type="match status" value="2"/>
</dbReference>
<dbReference type="InterPro" id="IPR036236">
    <property type="entry name" value="Znf_C2H2_sf"/>
</dbReference>
<dbReference type="InterPro" id="IPR013087">
    <property type="entry name" value="Znf_C2H2_type"/>
</dbReference>
<dbReference type="PANTHER" id="PTHR23235">
    <property type="entry name" value="KRUEPPEL-LIKE TRANSCRIPTION FACTOR"/>
    <property type="match status" value="1"/>
</dbReference>
<dbReference type="PANTHER" id="PTHR23235:SF120">
    <property type="entry name" value="KRUPPEL-LIKE FACTOR 15"/>
    <property type="match status" value="1"/>
</dbReference>
<dbReference type="Pfam" id="PF00096">
    <property type="entry name" value="zf-C2H2"/>
    <property type="match status" value="2"/>
</dbReference>
<dbReference type="SMART" id="SM00355">
    <property type="entry name" value="ZnF_C2H2"/>
    <property type="match status" value="2"/>
</dbReference>
<dbReference type="SUPFAM" id="SSF57667">
    <property type="entry name" value="beta-beta-alpha zinc fingers"/>
    <property type="match status" value="1"/>
</dbReference>
<dbReference type="PROSITE" id="PS00028">
    <property type="entry name" value="ZINC_FINGER_C2H2_1"/>
    <property type="match status" value="1"/>
</dbReference>
<dbReference type="PROSITE" id="PS50157">
    <property type="entry name" value="ZINC_FINGER_C2H2_2"/>
    <property type="match status" value="2"/>
</dbReference>
<keyword id="KW-0963">Cytoplasm</keyword>
<keyword id="KW-0238">DNA-binding</keyword>
<keyword id="KW-0479">Metal-binding</keyword>
<keyword id="KW-0539">Nucleus</keyword>
<keyword id="KW-1185">Reference proteome</keyword>
<keyword id="KW-0677">Repeat</keyword>
<keyword id="KW-0804">Transcription</keyword>
<keyword id="KW-0805">Transcription regulation</keyword>
<keyword id="KW-0862">Zinc</keyword>
<keyword id="KW-0863">Zinc-finger</keyword>
<reference key="1">
    <citation type="journal article" date="1997" name="Nature">
        <title>The nucleotide sequence of Saccharomyces cerevisiae chromosome IV.</title>
        <authorList>
            <person name="Jacq C."/>
            <person name="Alt-Moerbe J."/>
            <person name="Andre B."/>
            <person name="Arnold W."/>
            <person name="Bahr A."/>
            <person name="Ballesta J.P.G."/>
            <person name="Bargues M."/>
            <person name="Baron L."/>
            <person name="Becker A."/>
            <person name="Biteau N."/>
            <person name="Bloecker H."/>
            <person name="Blugeon C."/>
            <person name="Boskovic J."/>
            <person name="Brandt P."/>
            <person name="Brueckner M."/>
            <person name="Buitrago M.J."/>
            <person name="Coster F."/>
            <person name="Delaveau T."/>
            <person name="del Rey F."/>
            <person name="Dujon B."/>
            <person name="Eide L.G."/>
            <person name="Garcia-Cantalejo J.M."/>
            <person name="Goffeau A."/>
            <person name="Gomez-Peris A."/>
            <person name="Granotier C."/>
            <person name="Hanemann V."/>
            <person name="Hankeln T."/>
            <person name="Hoheisel J.D."/>
            <person name="Jaeger W."/>
            <person name="Jimenez A."/>
            <person name="Jonniaux J.-L."/>
            <person name="Kraemer C."/>
            <person name="Kuester H."/>
            <person name="Laamanen P."/>
            <person name="Legros Y."/>
            <person name="Louis E.J."/>
            <person name="Moeller-Rieker S."/>
            <person name="Monnet A."/>
            <person name="Moro M."/>
            <person name="Mueller-Auer S."/>
            <person name="Nussbaumer B."/>
            <person name="Paricio N."/>
            <person name="Paulin L."/>
            <person name="Perea J."/>
            <person name="Perez-Alonso M."/>
            <person name="Perez-Ortin J.E."/>
            <person name="Pohl T.M."/>
            <person name="Prydz H."/>
            <person name="Purnelle B."/>
            <person name="Rasmussen S.W."/>
            <person name="Remacha M.A."/>
            <person name="Revuelta J.L."/>
            <person name="Rieger M."/>
            <person name="Salom D."/>
            <person name="Saluz H.P."/>
            <person name="Saiz J.E."/>
            <person name="Saren A.-M."/>
            <person name="Schaefer M."/>
            <person name="Scharfe M."/>
            <person name="Schmidt E.R."/>
            <person name="Schneider C."/>
            <person name="Scholler P."/>
            <person name="Schwarz S."/>
            <person name="Soler-Mira A."/>
            <person name="Urrestarazu L.A."/>
            <person name="Verhasselt P."/>
            <person name="Vissers S."/>
            <person name="Voet M."/>
            <person name="Volckaert G."/>
            <person name="Wagner G."/>
            <person name="Wambutt R."/>
            <person name="Wedler E."/>
            <person name="Wedler H."/>
            <person name="Woelfl S."/>
            <person name="Harris D.E."/>
            <person name="Bowman S."/>
            <person name="Brown D."/>
            <person name="Churcher C.M."/>
            <person name="Connor R."/>
            <person name="Dedman K."/>
            <person name="Gentles S."/>
            <person name="Hamlin N."/>
            <person name="Hunt S."/>
            <person name="Jones L."/>
            <person name="McDonald S."/>
            <person name="Murphy L.D."/>
            <person name="Niblett D."/>
            <person name="Odell C."/>
            <person name="Oliver K."/>
            <person name="Rajandream M.A."/>
            <person name="Richards C."/>
            <person name="Shore L."/>
            <person name="Walsh S.V."/>
            <person name="Barrell B.G."/>
            <person name="Dietrich F.S."/>
            <person name="Mulligan J.T."/>
            <person name="Allen E."/>
            <person name="Araujo R."/>
            <person name="Aviles E."/>
            <person name="Berno A."/>
            <person name="Carpenter J."/>
            <person name="Chen E."/>
            <person name="Cherry J.M."/>
            <person name="Chung E."/>
            <person name="Duncan M."/>
            <person name="Hunicke-Smith S."/>
            <person name="Hyman R.W."/>
            <person name="Komp C."/>
            <person name="Lashkari D."/>
            <person name="Lew H."/>
            <person name="Lin D."/>
            <person name="Mosedale D."/>
            <person name="Nakahara K."/>
            <person name="Namath A."/>
            <person name="Oefner P."/>
            <person name="Oh C."/>
            <person name="Petel F.X."/>
            <person name="Roberts D."/>
            <person name="Schramm S."/>
            <person name="Schroeder M."/>
            <person name="Shogren T."/>
            <person name="Shroff N."/>
            <person name="Winant A."/>
            <person name="Yelton M.A."/>
            <person name="Botstein D."/>
            <person name="Davis R.W."/>
            <person name="Johnston M."/>
            <person name="Andrews S."/>
            <person name="Brinkman R."/>
            <person name="Cooper J."/>
            <person name="Ding H."/>
            <person name="Du Z."/>
            <person name="Favello A."/>
            <person name="Fulton L."/>
            <person name="Gattung S."/>
            <person name="Greco T."/>
            <person name="Hallsworth K."/>
            <person name="Hawkins J."/>
            <person name="Hillier L.W."/>
            <person name="Jier M."/>
            <person name="Johnson D."/>
            <person name="Johnston L."/>
            <person name="Kirsten J."/>
            <person name="Kucaba T."/>
            <person name="Langston Y."/>
            <person name="Latreille P."/>
            <person name="Le T."/>
            <person name="Mardis E."/>
            <person name="Menezes S."/>
            <person name="Miller N."/>
            <person name="Nhan M."/>
            <person name="Pauley A."/>
            <person name="Peluso D."/>
            <person name="Rifkin L."/>
            <person name="Riles L."/>
            <person name="Taich A."/>
            <person name="Trevaskis E."/>
            <person name="Vignati D."/>
            <person name="Wilcox L."/>
            <person name="Wohldman P."/>
            <person name="Vaudin M."/>
            <person name="Wilson R."/>
            <person name="Waterston R."/>
            <person name="Albermann K."/>
            <person name="Hani J."/>
            <person name="Heumann K."/>
            <person name="Kleine K."/>
            <person name="Mewes H.-W."/>
            <person name="Zollner A."/>
            <person name="Zaccaria P."/>
        </authorList>
    </citation>
    <scope>NUCLEOTIDE SEQUENCE [LARGE SCALE GENOMIC DNA]</scope>
    <source>
        <strain>ATCC 204508 / S288c</strain>
    </source>
</reference>
<reference key="2">
    <citation type="journal article" date="2014" name="G3 (Bethesda)">
        <title>The reference genome sequence of Saccharomyces cerevisiae: Then and now.</title>
        <authorList>
            <person name="Engel S.R."/>
            <person name="Dietrich F.S."/>
            <person name="Fisk D.G."/>
            <person name="Binkley G."/>
            <person name="Balakrishnan R."/>
            <person name="Costanzo M.C."/>
            <person name="Dwight S.S."/>
            <person name="Hitz B.C."/>
            <person name="Karra K."/>
            <person name="Nash R.S."/>
            <person name="Weng S."/>
            <person name="Wong E.D."/>
            <person name="Lloyd P."/>
            <person name="Skrzypek M.S."/>
            <person name="Miyasato S.R."/>
            <person name="Simison M."/>
            <person name="Cherry J.M."/>
        </authorList>
    </citation>
    <scope>GENOME REANNOTATION</scope>
    <source>
        <strain>ATCC 204508 / S288c</strain>
    </source>
</reference>
<reference key="3">
    <citation type="journal article" date="2007" name="Genome Res.">
        <title>Approaching a complete repository of sequence-verified protein-encoding clones for Saccharomyces cerevisiae.</title>
        <authorList>
            <person name="Hu Y."/>
            <person name="Rolfs A."/>
            <person name="Bhullar B."/>
            <person name="Murthy T.V.S."/>
            <person name="Zhu C."/>
            <person name="Berger M.F."/>
            <person name="Camargo A.A."/>
            <person name="Kelley F."/>
            <person name="McCarron S."/>
            <person name="Jepson D."/>
            <person name="Richardson A."/>
            <person name="Raphael J."/>
            <person name="Moreira D."/>
            <person name="Taycher E."/>
            <person name="Zuo D."/>
            <person name="Mohr S."/>
            <person name="Kane M.F."/>
            <person name="Williamson J."/>
            <person name="Simpson A.J.G."/>
            <person name="Bulyk M.L."/>
            <person name="Harlow E."/>
            <person name="Marsischky G."/>
            <person name="Kolodner R.D."/>
            <person name="LaBaer J."/>
        </authorList>
    </citation>
    <scope>NUCLEOTIDE SEQUENCE [GENOMIC DNA]</scope>
    <source>
        <strain>ATCC 204508 / S288c</strain>
    </source>
</reference>
<reference key="4">
    <citation type="journal article" date="1998" name="EMBO J.">
        <title>Multiple transcriptional activation complexes tether the yeast activator Met4 to DNA.</title>
        <authorList>
            <person name="Blaiseau P.L."/>
            <person name="Thomas D."/>
        </authorList>
    </citation>
    <scope>FUNCTION</scope>
    <scope>INTERACTION WITH MET4 AND MET28</scope>
</reference>
<reference key="5">
    <citation type="journal article" date="2003" name="Nature">
        <title>Global analysis of protein localization in budding yeast.</title>
        <authorList>
            <person name="Huh W.-K."/>
            <person name="Falvo J.V."/>
            <person name="Gerke L.C."/>
            <person name="Carroll A.S."/>
            <person name="Howson R.W."/>
            <person name="Weissman J.S."/>
            <person name="O'Shea E.K."/>
        </authorList>
    </citation>
    <scope>SUBCELLULAR LOCATION [LARGE SCALE ANALYSIS]</scope>
</reference>
<sequence>MEDQDAAFIKQATEAIVDVSLNIDNIDPIIKELLERVRNRQNRLQNKKPALIPAENGVDINSQGGNIKVKKENALPKPPKSSKSKPQDRRNSTGEKRFKCAKCSLEFSRSSDLRRHEKTHFAILPNICPQCGKGFARKDALKRHYDTLTCRRNRTKLLTAGGEGINELLKKVKQSNIVHRQDNNHNGSSNG</sequence>
<name>MET32_YEAST</name>
<proteinExistence type="evidence at protein level"/>
<protein>
    <recommendedName>
        <fullName>Transcriptional regulator MET32</fullName>
    </recommendedName>
    <alternativeName>
        <fullName>Methionine-requiring protein 32</fullName>
    </alternativeName>
</protein>
<feature type="chain" id="PRO_0000046809" description="Transcriptional regulator MET32">
    <location>
        <begin position="1"/>
        <end position="191"/>
    </location>
</feature>
<feature type="zinc finger region" description="C2H2-type 1" evidence="1">
    <location>
        <begin position="98"/>
        <end position="120"/>
    </location>
</feature>
<feature type="zinc finger region" description="C2H2-type 2; atypical" evidence="1">
    <location>
        <begin position="126"/>
        <end position="150"/>
    </location>
</feature>
<feature type="region of interest" description="Disordered" evidence="2">
    <location>
        <begin position="70"/>
        <end position="96"/>
    </location>
</feature>
<feature type="compositionally biased region" description="Basic and acidic residues" evidence="2">
    <location>
        <begin position="85"/>
        <end position="96"/>
    </location>
</feature>
<accession>Q12041</accession>
<accession>D6VSN3</accession>
<organism>
    <name type="scientific">Saccharomyces cerevisiae (strain ATCC 204508 / S288c)</name>
    <name type="common">Baker's yeast</name>
    <dbReference type="NCBI Taxonomy" id="559292"/>
    <lineage>
        <taxon>Eukaryota</taxon>
        <taxon>Fungi</taxon>
        <taxon>Dikarya</taxon>
        <taxon>Ascomycota</taxon>
        <taxon>Saccharomycotina</taxon>
        <taxon>Saccharomycetes</taxon>
        <taxon>Saccharomycetales</taxon>
        <taxon>Saccharomycetaceae</taxon>
        <taxon>Saccharomyces</taxon>
    </lineage>
</organism>
<evidence type="ECO:0000255" key="1">
    <source>
        <dbReference type="PROSITE-ProRule" id="PRU00042"/>
    </source>
</evidence>
<evidence type="ECO:0000256" key="2">
    <source>
        <dbReference type="SAM" id="MobiDB-lite"/>
    </source>
</evidence>
<evidence type="ECO:0000269" key="3">
    <source>
    </source>
</evidence>
<evidence type="ECO:0000269" key="4">
    <source>
    </source>
</evidence>